<accession>P84232</accession>
<accession>P02295</accession>
<accession>P02297</accession>
<accession>P16105</accession>
<accession>P17269</accession>
<accession>P17320</accession>
<organism>
    <name type="scientific">Poroderma africanum</name>
    <name type="common">Striped catshark</name>
    <name type="synonym">Squalus afriicanus</name>
    <dbReference type="NCBI Taxonomy" id="30489"/>
    <lineage>
        <taxon>Eukaryota</taxon>
        <taxon>Metazoa</taxon>
        <taxon>Chordata</taxon>
        <taxon>Craniata</taxon>
        <taxon>Vertebrata</taxon>
        <taxon>Chondrichthyes</taxon>
        <taxon>Elasmobranchii</taxon>
        <taxon>Galeomorphii</taxon>
        <taxon>Galeoidea</taxon>
        <taxon>Carcharhiniformes</taxon>
        <taxon>Scyliorhinidae</taxon>
        <taxon>Poroderma</taxon>
    </lineage>
</organism>
<name>H32_PORAF</name>
<sequence length="136" mass="15388">MARTKQTARKSTGGKAPRKQLATKAARKSAPATGGVKKPHRYRPGTVALREIRRYQKSTELLIRKLPFQRLVREIAQDFKTDLRFQSSAVMALQEASEAYLVGLFEDTNLCAIHAKRVTIMPKDIQLARRIRGERA</sequence>
<proteinExistence type="evidence at protein level"/>
<protein>
    <recommendedName>
        <fullName>Histone H3.2</fullName>
    </recommendedName>
</protein>
<feature type="initiator methionine" description="Removed" evidence="9">
    <location>
        <position position="1"/>
    </location>
</feature>
<feature type="chain" id="PRO_0000221264" description="Histone H3.2">
    <location>
        <begin position="2"/>
        <end position="136"/>
    </location>
</feature>
<feature type="region of interest" description="Disordered" evidence="8">
    <location>
        <begin position="1"/>
        <end position="43"/>
    </location>
</feature>
<feature type="modified residue" description="Asymmetric dimethylarginine; by PRMT6; alternate" evidence="7">
    <location>
        <position position="3"/>
    </location>
</feature>
<feature type="modified residue" description="Citrulline; alternate" evidence="7">
    <location>
        <position position="3"/>
    </location>
</feature>
<feature type="modified residue" description="Phosphothreonine; by HASPIN and VRK1" evidence="7">
    <location>
        <position position="4"/>
    </location>
</feature>
<feature type="modified residue" description="Allysine; alternate" evidence="7">
    <location>
        <position position="5"/>
    </location>
</feature>
<feature type="modified residue" description="N6,N6,N6-trimethyllysine; alternate" evidence="7">
    <location>
        <position position="5"/>
    </location>
</feature>
<feature type="modified residue" description="N6,N6-dimethyllysine; alternate" evidence="7">
    <location>
        <position position="5"/>
    </location>
</feature>
<feature type="modified residue" description="N6-(2-hydroxyisobutyryl)lysine; alternate" evidence="2">
    <location>
        <position position="5"/>
    </location>
</feature>
<feature type="modified residue" description="N6-acetyllysine; alternate" evidence="7">
    <location>
        <position position="5"/>
    </location>
</feature>
<feature type="modified residue" description="N6-crotonyllysine; alternate" evidence="7">
    <location>
        <position position="5"/>
    </location>
</feature>
<feature type="modified residue" description="N6-methyllysine; alternate" evidence="7">
    <location>
        <position position="5"/>
    </location>
</feature>
<feature type="modified residue" description="5-glutamyl dopamine; alternate" evidence="7">
    <location>
        <position position="6"/>
    </location>
</feature>
<feature type="modified residue" description="5-glutamyl serotonin; alternate" evidence="7">
    <location>
        <position position="6"/>
    </location>
</feature>
<feature type="modified residue" description="Phosphothreonine; by PKC" evidence="7">
    <location>
        <position position="7"/>
    </location>
</feature>
<feature type="modified residue" description="Citrulline; alternate" evidence="7">
    <location>
        <position position="9"/>
    </location>
</feature>
<feature type="modified residue" description="Symmetric dimethylarginine; by PRMT5; alternate" evidence="1">
    <location>
        <position position="9"/>
    </location>
</feature>
<feature type="modified residue" description="N6,N6,N6-trimethyllysine; alternate" evidence="7">
    <location>
        <position position="10"/>
    </location>
</feature>
<feature type="modified residue" description="N6,N6-dimethyllysine; alternate" evidence="9">
    <location>
        <position position="10"/>
    </location>
</feature>
<feature type="modified residue" description="N6-(2-hydroxyisobutyryl)lysine; alternate" evidence="2">
    <location>
        <position position="10"/>
    </location>
</feature>
<feature type="modified residue" description="N6-acetyllysine; alternate" evidence="7">
    <location>
        <position position="10"/>
    </location>
</feature>
<feature type="modified residue" description="N6-crotonyllysine; alternate" evidence="7">
    <location>
        <position position="10"/>
    </location>
</feature>
<feature type="modified residue" description="N6-lactoyllysine; alternate" evidence="7">
    <location>
        <position position="10"/>
    </location>
</feature>
<feature type="modified residue" description="N6-methyllysine; alternate" evidence="9">
    <location>
        <position position="10"/>
    </location>
</feature>
<feature type="modified residue" description="ADP-ribosylserine; alternate" evidence="2">
    <location>
        <position position="11"/>
    </location>
</feature>
<feature type="modified residue" description="Phosphoserine; alternate; by AURKB, AURKC, RPS6KA3, RPS6KA4 and RPS6KA5" evidence="7">
    <location>
        <position position="11"/>
    </location>
</feature>
<feature type="modified residue" description="Phosphothreonine; by PKC" evidence="7">
    <location>
        <position position="12"/>
    </location>
</feature>
<feature type="modified residue" description="N6-(2-hydroxyisobutyryl)lysine; alternate" evidence="2">
    <location>
        <position position="15"/>
    </location>
</feature>
<feature type="modified residue" description="N6-acetyllysine" evidence="7">
    <location>
        <position position="15"/>
    </location>
</feature>
<feature type="modified residue" description="N6-glutaryllysine; alternate" evidence="7">
    <location>
        <position position="15"/>
    </location>
</feature>
<feature type="modified residue" description="N6-lactoyllysine; alternate" evidence="4">
    <location>
        <position position="15"/>
    </location>
</feature>
<feature type="modified residue" description="Asymmetric dimethylarginine; by CARM1; alternate" evidence="7">
    <location>
        <position position="18"/>
    </location>
</feature>
<feature type="modified residue" description="Citrulline; alternate" evidence="7">
    <location>
        <position position="18"/>
    </location>
</feature>
<feature type="modified residue" description="N6-(2-hydroxyisobutyryl)lysine; alternate" evidence="2">
    <location>
        <position position="19"/>
    </location>
</feature>
<feature type="modified residue" description="N6-acetyllysine; alternate" evidence="7">
    <location>
        <position position="19"/>
    </location>
</feature>
<feature type="modified residue" description="N6-butyryllysine; alternate" evidence="3">
    <location>
        <position position="19"/>
    </location>
</feature>
<feature type="modified residue" description="N6-crotonyllysine; alternate" evidence="7">
    <location>
        <position position="19"/>
    </location>
</feature>
<feature type="modified residue" description="N6-glutaryllysine; alternate" evidence="7">
    <location>
        <position position="19"/>
    </location>
</feature>
<feature type="modified residue" description="N6-lactoyllysine; alternate" evidence="7">
    <location>
        <position position="19"/>
    </location>
</feature>
<feature type="modified residue" description="N6-methyllysine; alternate" evidence="7">
    <location>
        <position position="19"/>
    </location>
</feature>
<feature type="modified residue" description="N6-(2-hydroxyisobutyryl)lysine; alternate" evidence="2">
    <location>
        <position position="24"/>
    </location>
</feature>
<feature type="modified residue" description="N6-acetyllysine; alternate" evidence="7">
    <location>
        <position position="24"/>
    </location>
</feature>
<feature type="modified residue" description="N6-butyryllysine; alternate" evidence="3">
    <location>
        <position position="24"/>
    </location>
</feature>
<feature type="modified residue" description="N6-crotonyllysine; alternate" evidence="7">
    <location>
        <position position="24"/>
    </location>
</feature>
<feature type="modified residue" description="N6-glutaryllysine; alternate" evidence="7">
    <location>
        <position position="24"/>
    </location>
</feature>
<feature type="modified residue" description="N6-lactoyllysine; alternate" evidence="7">
    <location>
        <position position="24"/>
    </location>
</feature>
<feature type="modified residue" description="N6-methyllysine; alternate" evidence="7">
    <location>
        <position position="24"/>
    </location>
</feature>
<feature type="modified residue" description="Citrulline" evidence="7">
    <location>
        <position position="27"/>
    </location>
</feature>
<feature type="modified residue" description="N6,N6,N6-trimethyllysine; alternate" evidence="7">
    <location>
        <position position="28"/>
    </location>
</feature>
<feature type="modified residue" description="N6,N6-dimethyllysine; alternate" evidence="9">
    <location>
        <position position="28"/>
    </location>
</feature>
<feature type="modified residue" description="N6-(2-hydroxyisobutyryl)lysine; alternate" evidence="2">
    <location>
        <position position="28"/>
    </location>
</feature>
<feature type="modified residue" description="N6-acetyllysine; alternate" evidence="7">
    <location>
        <position position="28"/>
    </location>
</feature>
<feature type="modified residue" description="N6-crotonyllysine; alternate" evidence="7">
    <location>
        <position position="28"/>
    </location>
</feature>
<feature type="modified residue" description="N6-glutaryllysine; alternate" evidence="7">
    <location>
        <position position="28"/>
    </location>
</feature>
<feature type="modified residue" description="N6-lactoyllysine; alternate" evidence="7">
    <location>
        <position position="28"/>
    </location>
</feature>
<feature type="modified residue" description="N6-methyllysine; alternate" evidence="9">
    <location>
        <position position="28"/>
    </location>
</feature>
<feature type="modified residue" description="ADP-ribosylserine; alternate" evidence="2">
    <location>
        <position position="29"/>
    </location>
</feature>
<feature type="modified residue" description="Phosphoserine; alternate; by AURKB, AURKC and RPS6KA5" evidence="7">
    <location>
        <position position="29"/>
    </location>
</feature>
<feature type="modified residue" description="N6,N6,N6-trimethyllysine; alternate" evidence="7">
    <location>
        <position position="37"/>
    </location>
</feature>
<feature type="modified residue" description="N6,N6-dimethyllysine; alternate" evidence="9">
    <location>
        <position position="37"/>
    </location>
</feature>
<feature type="modified residue" description="N6-(2-hydroxyisobutyryl)lysine; alternate" evidence="2">
    <location>
        <position position="37"/>
    </location>
</feature>
<feature type="modified residue" description="N6-acetyllysine; alternate" evidence="7">
    <location>
        <position position="37"/>
    </location>
</feature>
<feature type="modified residue" description="N6-methyllysine; alternate" evidence="9">
    <location>
        <position position="37"/>
    </location>
</feature>
<feature type="modified residue" description="N6-methyllysine" evidence="2">
    <location>
        <position position="38"/>
    </location>
</feature>
<feature type="modified residue" description="Phosphotyrosine" evidence="7">
    <location>
        <position position="42"/>
    </location>
</feature>
<feature type="modified residue" description="N6,N6,N6-trimethyllysine; alternate" evidence="7">
    <location>
        <position position="57"/>
    </location>
</feature>
<feature type="modified residue" description="N6-(2-hydroxyisobutyryl)lysine; alternate" evidence="2">
    <location>
        <position position="57"/>
    </location>
</feature>
<feature type="modified residue" description="N6-acetyllysine; alternate" evidence="7">
    <location>
        <position position="57"/>
    </location>
</feature>
<feature type="modified residue" description="N6-crotonyllysine; alternate" evidence="7">
    <location>
        <position position="57"/>
    </location>
</feature>
<feature type="modified residue" description="N6-glutaryllysine; alternate" evidence="7">
    <location>
        <position position="57"/>
    </location>
</feature>
<feature type="modified residue" description="N6-lactoyllysine; alternate" evidence="4">
    <location>
        <position position="57"/>
    </location>
</feature>
<feature type="modified residue" description="N6-methyllysine; by EHMT2; alternate" evidence="7">
    <location>
        <position position="57"/>
    </location>
</feature>
<feature type="modified residue" description="N6-succinyllysine; alternate" evidence="4">
    <location>
        <position position="57"/>
    </location>
</feature>
<feature type="modified residue" description="Phosphoserine" evidence="7">
    <location>
        <position position="58"/>
    </location>
</feature>
<feature type="modified residue" description="N6-(2-hydroxyisobutyryl)lysine; alternate" evidence="2">
    <location>
        <position position="65"/>
    </location>
</feature>
<feature type="modified residue" description="N6-methyllysine; alternate" evidence="7">
    <location>
        <position position="65"/>
    </location>
</feature>
<feature type="modified residue" description="N6,N6,N6-trimethyllysine; alternate" evidence="4">
    <location>
        <position position="80"/>
    </location>
</feature>
<feature type="modified residue" description="N6,N6-dimethyllysine; alternate" evidence="7">
    <location>
        <position position="80"/>
    </location>
</feature>
<feature type="modified residue" description="N6-(2-hydroxyisobutyryl)lysine; alternate" evidence="2">
    <location>
        <position position="80"/>
    </location>
</feature>
<feature type="modified residue" description="N6-acetyllysine; alternate" evidence="7">
    <location>
        <position position="80"/>
    </location>
</feature>
<feature type="modified residue" description="N6-glutaryllysine; alternate" evidence="7">
    <location>
        <position position="80"/>
    </location>
</feature>
<feature type="modified residue" description="N6-lactoyllysine; alternate" evidence="7">
    <location>
        <position position="80"/>
    </location>
</feature>
<feature type="modified residue" description="N6-methyllysine; alternate" evidence="7">
    <location>
        <position position="80"/>
    </location>
</feature>
<feature type="modified residue" description="N6-succinyllysine; alternate" evidence="4">
    <location>
        <position position="80"/>
    </location>
</feature>
<feature type="modified residue" description="Phosphothreonine" evidence="7">
    <location>
        <position position="81"/>
    </location>
</feature>
<feature type="modified residue" description="Phosphoserine" evidence="5">
    <location>
        <position position="87"/>
    </location>
</feature>
<feature type="modified residue" description="Phosphothreonine" evidence="7">
    <location>
        <position position="108"/>
    </location>
</feature>
<feature type="modified residue" description="N6-acetyllysine; alternate" evidence="7">
    <location>
        <position position="116"/>
    </location>
</feature>
<feature type="modified residue" description="N6-glutaryllysine; alternate" evidence="7">
    <location>
        <position position="116"/>
    </location>
</feature>
<feature type="modified residue" description="N6-(2-hydroxyisobutyryl)lysine; alternate" evidence="2">
    <location>
        <position position="123"/>
    </location>
</feature>
<feature type="modified residue" description="N6-acetyllysine; alternate" evidence="7">
    <location>
        <position position="123"/>
    </location>
</feature>
<feature type="modified residue" description="N6-glutaryllysine; alternate" evidence="7">
    <location>
        <position position="123"/>
    </location>
</feature>
<feature type="modified residue" description="N6-methyllysine; alternate" evidence="7">
    <location>
        <position position="123"/>
    </location>
</feature>
<feature type="modified residue" description="N6-succinyllysine; alternate" evidence="7">
    <location>
        <position position="123"/>
    </location>
</feature>
<feature type="lipid moiety-binding region" description="S-palmitoyl cysteine" evidence="7">
    <location>
        <position position="111"/>
    </location>
</feature>
<dbReference type="PIR" id="A02626">
    <property type="entry name" value="HSRK3"/>
</dbReference>
<dbReference type="SMR" id="P84232"/>
<dbReference type="iPTMnet" id="P84232"/>
<dbReference type="GO" id="GO:0000786">
    <property type="term" value="C:nucleosome"/>
    <property type="evidence" value="ECO:0007669"/>
    <property type="project" value="UniProtKB-KW"/>
</dbReference>
<dbReference type="GO" id="GO:0005634">
    <property type="term" value="C:nucleus"/>
    <property type="evidence" value="ECO:0007669"/>
    <property type="project" value="UniProtKB-SubCell"/>
</dbReference>
<dbReference type="GO" id="GO:0003677">
    <property type="term" value="F:DNA binding"/>
    <property type="evidence" value="ECO:0007669"/>
    <property type="project" value="UniProtKB-KW"/>
</dbReference>
<dbReference type="GO" id="GO:0046982">
    <property type="term" value="F:protein heterodimerization activity"/>
    <property type="evidence" value="ECO:0007669"/>
    <property type="project" value="InterPro"/>
</dbReference>
<dbReference type="GO" id="GO:0030527">
    <property type="term" value="F:structural constituent of chromatin"/>
    <property type="evidence" value="ECO:0007669"/>
    <property type="project" value="InterPro"/>
</dbReference>
<dbReference type="CDD" id="cd22911">
    <property type="entry name" value="HFD_H3"/>
    <property type="match status" value="1"/>
</dbReference>
<dbReference type="FunFam" id="1.10.20.10:FF:000078">
    <property type="entry name" value="Histone H3"/>
    <property type="match status" value="1"/>
</dbReference>
<dbReference type="FunFam" id="1.10.20.10:FF:000044">
    <property type="entry name" value="Histone H3.3"/>
    <property type="match status" value="1"/>
</dbReference>
<dbReference type="Gene3D" id="1.10.20.10">
    <property type="entry name" value="Histone, subunit A"/>
    <property type="match status" value="1"/>
</dbReference>
<dbReference type="InterPro" id="IPR009072">
    <property type="entry name" value="Histone-fold"/>
</dbReference>
<dbReference type="InterPro" id="IPR007125">
    <property type="entry name" value="Histone_H2A/H2B/H3"/>
</dbReference>
<dbReference type="InterPro" id="IPR000164">
    <property type="entry name" value="Histone_H3/CENP-A"/>
</dbReference>
<dbReference type="PANTHER" id="PTHR11426">
    <property type="entry name" value="HISTONE H3"/>
    <property type="match status" value="1"/>
</dbReference>
<dbReference type="Pfam" id="PF00125">
    <property type="entry name" value="Histone"/>
    <property type="match status" value="1"/>
</dbReference>
<dbReference type="PRINTS" id="PR00622">
    <property type="entry name" value="HISTONEH3"/>
</dbReference>
<dbReference type="SMART" id="SM00428">
    <property type="entry name" value="H3"/>
    <property type="match status" value="1"/>
</dbReference>
<dbReference type="SUPFAM" id="SSF47113">
    <property type="entry name" value="Histone-fold"/>
    <property type="match status" value="1"/>
</dbReference>
<dbReference type="PROSITE" id="PS00322">
    <property type="entry name" value="HISTONE_H3_1"/>
    <property type="match status" value="1"/>
</dbReference>
<dbReference type="PROSITE" id="PS00959">
    <property type="entry name" value="HISTONE_H3_2"/>
    <property type="match status" value="1"/>
</dbReference>
<comment type="function">
    <text>Core component of nucleosome. Nucleosomes wrap and compact DNA into chromatin, limiting DNA accessibility to the cellular machineries which require DNA as a template. Histones thereby play a central role in transcription regulation, DNA repair, DNA replication and chromosomal stability. DNA accessibility is regulated via a complex set of post-translational modifications of histones, also called histone code, and nucleosome remodeling.</text>
</comment>
<comment type="subunit">
    <text>The nucleosome is a histone octamer containing two molecules each of H2A, H2B, H3 and H4 assembled in one H3-H4 heterotetramer and two H2A-H2B heterodimers. The octamer wraps approximately 147 bp of DNA.</text>
</comment>
<comment type="subcellular location">
    <subcellularLocation>
        <location>Nucleus</location>
    </subcellularLocation>
    <subcellularLocation>
        <location>Chromosome</location>
    </subcellularLocation>
</comment>
<comment type="developmental stage">
    <text>Expressed during S phase, then expression strongly decreases as cell division slows down during the process of differentiation.</text>
</comment>
<comment type="PTM">
    <text evidence="7">Acetylation is generally linked to gene activation. Acetylation on Lys-19 (H3K18ac) and Lys-24 (H3K24ac) favors methylation at Arg-18 (H3R17me). Acetylation at Lys-123 (H3K122ac) by EP300/p300 plays a central role in chromatin structure: localizes at the surface of the histone octamer and stimulates transcription, possibly by promoting nucleosome instability (By similarity).</text>
</comment>
<comment type="PTM">
    <text evidence="7">Asymmetric dimethylation at Arg-18 (H3R17me2a) is linked to gene activation. Asymmetric dimethylation at Arg-3 (H3R2me2a) by prmt6 is linked to gene repression and is mutually exclusive with H3 Lys-5 methylation (H3K4me2 and H3K4me3). H3R2me2a is present at the 3' of genes regardless of their transcription state and is enriched on inactive promoters, while it is absent on active promoters (By similarity).</text>
</comment>
<comment type="PTM">
    <text evidence="7">Methylation at Lys-5 (H3K4me), Lys-37 (H3K36me) and Lys-80 (H3K79me) are linked to gene activation. Methylation at Lys-5 (H3K4me) facilitates subsequent acetylation of H3 and H4. Methylation at Lys-80 (H3K79me) is associated with DNA double-strand break (DSB) responses and is a specific target for tp53bp1. Methylation at Lys-10 (H3K9me) and Lys-28 (H3K27me) are linked to gene repression. Methylation at Lys-10 (H3K9me) is a specific target for HP1 proteins (cbx1, cbx3 and cbx5) and prevents subsequent phosphorylation at Ser-11 (H3S10ph) and acetylation of H3 and H4. Methylation at Lys-5 (H3K4me) and Lys-80 (H3K79me) require preliminary monoubiquitination of H2B at 'Lys-120' (By similarity).</text>
</comment>
<comment type="PTM">
    <text evidence="7">Phosphorylated at Thr-4 (H3T3ph) by VRK1 (By similarity). Phosphorylated at Thr-4 (H3T3ph) by HASPIN during prophase and dephosphorylated during anaphase. Phosphorylation at Ser-11 (H3S10ph) by aurkb is crucial for chromosome condensation and cell-cycle progression during mitosis and meiosis. In addition phosphorylation at Ser-11 (H3S10ph) by rps6ka4 and rps6ka5 is important during interphase because it enables the transcription of genes following external stimulation, like mitogens, stress, growth factors or UV irradiation and result in the activation of genes, such as c-fos and c-jun. Phosphorylation at Ser-11 (H3S10ph), which is linked to gene activation, prevents methylation at Lys-10 (H3K9me) but facilitates acetylation of H3 and H4. Phosphorylation at Ser-11 (H3S10ph) by aurkb mediates the dissociation of HP1 proteins (cbx1, cbx3 and cbx5) from heterochromatin. Phosphorylation at Ser-11 (H3S10ph) is also an essential regulatory mechanism for neoplastic cell transformation. Phosphorylated at Ser-29 (H3S28ph) by MAP3K20 isoform 1, rps6ka5 or aurkb during mitosis or upon ultraviolet B irradiation. Phosphorylation at Thr-7 (H3T6ph) by prkcb is a specific tag for epigenetic transcriptional activation that prevents demethylation of Lys-5 (H3K4me) by lsd1/kdm1a. At centromeres, specifically phosphorylated at Thr-12 (H3T11ph) from prophase to early anaphase, by DAPK3 and PKN1. Phosphorylation at Thr-12 (H3T11ph) by PKN1 or isoform M2 of PKM (PKM2) is a specific tag for epigenetic transcriptional activation that promotes demethylation of Lys-10 (H3K9me) by kdm4c/jmjd2c. Phosphorylation at Tyr-42 (H3Y41ph) by jak2 promotes exclusion of cbx5 (HP1 alpha) from chromatin (By similarity).</text>
</comment>
<comment type="PTM">
    <text evidence="7">Monoubiquitinated by rag1 in lymphoid cells, monoubiquitination is required for V(D)J recombination.</text>
</comment>
<comment type="PTM">
    <text evidence="7">Lysine deamination at Lys-5 (H3K4all) to form allysine only takes place on H3K4me3 and results in gene repression.</text>
</comment>
<comment type="PTM">
    <text evidence="3">Butyrylation of histones marks active promoters and competes with histone acetylation. It is present during late spermatogenesis.</text>
</comment>
<comment type="PTM">
    <text evidence="7">Succinylation at Lys-80 (H3K79succ) by KAT2A takes place with a maximum frequency around the transcription start sites of genes. It gives a specific tag for epigenetic transcription activation. Desuccinylation at Lys-123 (H3K122succ) by SIRT7 in response to DNA damage promotes chromatin condensation and double-strand breaks (DSBs) repair.</text>
</comment>
<comment type="PTM">
    <text evidence="2">Serine ADP-ribosylation by PARP1 or PARP2 constitutes the primary form of ADP-ribosylation of proteins in response to DNA damage. Serine ADP-ribosylation at Ser-11 (H3S10ADPr) promotes recruitment of CHD1L. H3S10ADPr is mutually exclusive with phosphorylation at Ser-11 (H3S10ph) and impairs acetylation at Lys-10 (H3K9ac).</text>
</comment>
<comment type="PTM">
    <text evidence="7">Serotonylated by TGM2 at Gln-6 (H3Q5ser) during serotonergic neuron differentiation (By similarity). H3Q5ser is associated with trimethylation of Lys-5 (H3K4me3) and enhances general transcription factor IID (TFIID) complex-binding to H3K4me3, thereby facilitating transcription (By similarity).</text>
</comment>
<comment type="PTM">
    <text evidence="6 7">Dopaminylated by TGM2 at Gln-6 (H3Q5dop) in ventral tegmental area (VTA) neurons (By similarity). H3Q5dop mediates neurotransmission-independent role of nuclear dopamine by regulating relapse-related transcriptional plasticity in the reward system (By similarity).</text>
</comment>
<comment type="PTM">
    <text evidence="7">Lactylated in macrophages by EP300/P300 by using lactoyl-CoA directly derived from endogenous or exogenous lactate, leading to stimulates gene transcription.</text>
</comment>
<comment type="similarity">
    <text evidence="10">Belongs to the histone H3 family.</text>
</comment>
<keyword id="KW-0007">Acetylation</keyword>
<keyword id="KW-0013">ADP-ribosylation</keyword>
<keyword id="KW-0158">Chromosome</keyword>
<keyword id="KW-0164">Citrullination</keyword>
<keyword id="KW-0903">Direct protein sequencing</keyword>
<keyword id="KW-0238">DNA-binding</keyword>
<keyword id="KW-0379">Hydroxylation</keyword>
<keyword id="KW-0449">Lipoprotein</keyword>
<keyword id="KW-0488">Methylation</keyword>
<keyword id="KW-0544">Nucleosome core</keyword>
<keyword id="KW-0539">Nucleus</keyword>
<keyword id="KW-0564">Palmitate</keyword>
<keyword id="KW-0597">Phosphoprotein</keyword>
<keyword id="KW-0832">Ubl conjugation</keyword>
<evidence type="ECO:0000250" key="1"/>
<evidence type="ECO:0000250" key="2">
    <source>
        <dbReference type="UniProtKB" id="P68431"/>
    </source>
</evidence>
<evidence type="ECO:0000250" key="3">
    <source>
        <dbReference type="UniProtKB" id="P68433"/>
    </source>
</evidence>
<evidence type="ECO:0000250" key="4">
    <source>
        <dbReference type="UniProtKB" id="P84228"/>
    </source>
</evidence>
<evidence type="ECO:0000250" key="5">
    <source>
        <dbReference type="UniProtKB" id="P84243"/>
    </source>
</evidence>
<evidence type="ECO:0000250" key="6">
    <source>
        <dbReference type="UniProtKB" id="P84245"/>
    </source>
</evidence>
<evidence type="ECO:0000250" key="7">
    <source>
        <dbReference type="UniProtKB" id="Q71DI3"/>
    </source>
</evidence>
<evidence type="ECO:0000256" key="8">
    <source>
        <dbReference type="SAM" id="MobiDB-lite"/>
    </source>
</evidence>
<evidence type="ECO:0000269" key="9">
    <source>
    </source>
</evidence>
<evidence type="ECO:0000305" key="10"/>
<reference key="1">
    <citation type="journal article" date="1974" name="FEBS Lett.">
        <title>The primary structure of histone F3 from shark erythrocytes.</title>
        <authorList>
            <person name="Brandt W.F."/>
            <person name="Strickland W.N."/>
            <person name="von Holt C."/>
        </authorList>
    </citation>
    <scope>PROTEIN SEQUENCE OF 2-136</scope>
    <scope>METHYLATION AT LYS-10; LYS-28 AND LYS-37</scope>
</reference>